<organism>
    <name type="scientific">Buchnera aphidicola subsp. Acyrthosiphon pisum (strain APS)</name>
    <name type="common">Acyrthosiphon pisum symbiotic bacterium</name>
    <dbReference type="NCBI Taxonomy" id="107806"/>
    <lineage>
        <taxon>Bacteria</taxon>
        <taxon>Pseudomonadati</taxon>
        <taxon>Pseudomonadota</taxon>
        <taxon>Gammaproteobacteria</taxon>
        <taxon>Enterobacterales</taxon>
        <taxon>Erwiniaceae</taxon>
        <taxon>Buchnera</taxon>
    </lineage>
</organism>
<keyword id="KW-0997">Cell inner membrane</keyword>
<keyword id="KW-1003">Cell membrane</keyword>
<keyword id="KW-0418">Kinase</keyword>
<keyword id="KW-0472">Membrane</keyword>
<keyword id="KW-0597">Phosphoprotein</keyword>
<keyword id="KW-0598">Phosphotransferase system</keyword>
<keyword id="KW-1185">Reference proteome</keyword>
<keyword id="KW-0762">Sugar transport</keyword>
<keyword id="KW-0808">Transferase</keyword>
<keyword id="KW-0812">Transmembrane</keyword>
<keyword id="KW-1133">Transmembrane helix</keyword>
<keyword id="KW-0813">Transport</keyword>
<sequence length="632" mass="69974">MLTLIKLKIQNFGRFLSNMIMPNISIFIAWGMMNALFMPLGWQPNKTLEQLISPMIFYLLPILIGYTGGSLISGSRGGLIGSITTIGVITSTNIPMLLGAMISGPLGGWTIKYFDKKIENKVKNGFEMLVNNFSLAILGILLAIISFFTIGPFIEWVSYFLGTLIQIILSYNLLPLTSIIIEPAKIFFLNNVINHGIFSPLGIQDALDKNHSIFFLIESNPGPGLGLLIAWFFFGKGELSKSSGGAALIEFFGGIHEIYFPYVLIKPKLIIPLILGGMSGIFILVLLHGGLISTASPGSILSILAMTPKGLYFSNIISVACSFLVSFISSSILLKYDFNTIQKDSNYTVKQGKNSFNSKTSREDFNNFNFSKIKTIIVACDAGMGSSAMGASILRKKIKNANLNHISVLNMAINALPQDADLIITHQNLTNRAKDNAPFSQHISLKNFLNNHFYDNLVKKLVENMVFLYDNHTDSVNKYTQQKKDALFQLNEENIILNQYASNKEEAINIVGKHLVKQGYVKFDYIDSMLEREKMASTWLGESIALPHGTIEAKDSVLKTGIIFCQFPKGVRFGEDVDDIAYLVIGIAAKNNEHIMVVSNITNALDKKDTIQRLSHTTSIKEALSLLTMEKI</sequence>
<name>PTM3C_BUCAI</name>
<gene>
    <name type="primary">mtlA</name>
    <name type="ordered locus">BU572</name>
</gene>
<reference key="1">
    <citation type="journal article" date="2000" name="Nature">
        <title>Genome sequence of the endocellular bacterial symbiont of aphids Buchnera sp. APS.</title>
        <authorList>
            <person name="Shigenobu S."/>
            <person name="Watanabe H."/>
            <person name="Hattori M."/>
            <person name="Sakaki Y."/>
            <person name="Ishikawa H."/>
        </authorList>
    </citation>
    <scope>NUCLEOTIDE SEQUENCE [LARGE SCALE GENOMIC DNA]</scope>
    <source>
        <strain>APS</strain>
    </source>
</reference>
<feature type="chain" id="PRO_0000186611" description="PTS system mannitol-specific EIICBA component">
    <location>
        <begin position="1"/>
        <end position="632"/>
    </location>
</feature>
<feature type="transmembrane region" description="Helical" evidence="1">
    <location>
        <begin position="24"/>
        <end position="45"/>
    </location>
</feature>
<feature type="transmembrane region" description="Helical" evidence="1">
    <location>
        <begin position="50"/>
        <end position="70"/>
    </location>
</feature>
<feature type="transmembrane region" description="Helical" evidence="1">
    <location>
        <begin position="134"/>
        <end position="155"/>
    </location>
</feature>
<feature type="transmembrane region" description="Helical" evidence="1">
    <location>
        <begin position="165"/>
        <end position="185"/>
    </location>
</feature>
<feature type="transmembrane region" description="Helical" evidence="1">
    <location>
        <begin position="273"/>
        <end position="292"/>
    </location>
</feature>
<feature type="transmembrane region" description="Helical" evidence="1">
    <location>
        <begin position="313"/>
        <end position="334"/>
    </location>
</feature>
<feature type="domain" description="PTS EIIC type-2" evidence="4">
    <location>
        <begin position="12"/>
        <end position="341"/>
    </location>
</feature>
<feature type="domain" description="PTS EIIB type-2" evidence="3">
    <location>
        <begin position="374"/>
        <end position="469"/>
    </location>
</feature>
<feature type="domain" description="PTS EIIA type-2" evidence="2">
    <location>
        <begin position="488"/>
        <end position="630"/>
    </location>
</feature>
<feature type="active site" description="Phosphocysteine intermediate; for EIIB activity" evidence="1">
    <location>
        <position position="380"/>
    </location>
</feature>
<feature type="active site" description="Tele-phosphohistidine intermediate; for EIIA activity" evidence="1 2">
    <location>
        <position position="548"/>
    </location>
</feature>
<feature type="site" description="Stabilizes the transition state in the phosphoryl transfer from HPr to EIIA" evidence="1">
    <location>
        <position position="532"/>
    </location>
</feature>
<feature type="modified residue" description="Phosphocysteine; by EIIA" evidence="1 3">
    <location>
        <position position="380"/>
    </location>
</feature>
<feature type="modified residue" description="Phosphohistidine; by HPr" evidence="1">
    <location>
        <position position="548"/>
    </location>
</feature>
<dbReference type="EC" id="2.7.1.197" evidence="1"/>
<dbReference type="EMBL" id="BA000003">
    <property type="protein sequence ID" value="BAB13262.1"/>
    <property type="molecule type" value="Genomic_DNA"/>
</dbReference>
<dbReference type="RefSeq" id="NP_240376.1">
    <property type="nucleotide sequence ID" value="NC_002528.1"/>
</dbReference>
<dbReference type="RefSeq" id="WP_009874520.1">
    <property type="nucleotide sequence ID" value="NC_002528.1"/>
</dbReference>
<dbReference type="SMR" id="P57635"/>
<dbReference type="STRING" id="563178.BUAP5A_565"/>
<dbReference type="EnsemblBacteria" id="BAB13262">
    <property type="protein sequence ID" value="BAB13262"/>
    <property type="gene ID" value="BAB13262"/>
</dbReference>
<dbReference type="KEGG" id="buc:BU572"/>
<dbReference type="PATRIC" id="fig|107806.10.peg.575"/>
<dbReference type="eggNOG" id="COG2213">
    <property type="taxonomic scope" value="Bacteria"/>
</dbReference>
<dbReference type="eggNOG" id="COG4668">
    <property type="taxonomic scope" value="Bacteria"/>
</dbReference>
<dbReference type="HOGENOM" id="CLU_028721_1_0_6"/>
<dbReference type="Proteomes" id="UP000001806">
    <property type="component" value="Chromosome"/>
</dbReference>
<dbReference type="GO" id="GO:0005886">
    <property type="term" value="C:plasma membrane"/>
    <property type="evidence" value="ECO:0007669"/>
    <property type="project" value="UniProtKB-SubCell"/>
</dbReference>
<dbReference type="GO" id="GO:0016301">
    <property type="term" value="F:kinase activity"/>
    <property type="evidence" value="ECO:0007669"/>
    <property type="project" value="UniProtKB-KW"/>
</dbReference>
<dbReference type="GO" id="GO:0022872">
    <property type="term" value="F:protein-N(PI)-phosphohistidine-mannitol phosphotransferase system transmembrane transporter activity"/>
    <property type="evidence" value="ECO:0007669"/>
    <property type="project" value="InterPro"/>
</dbReference>
<dbReference type="GO" id="GO:0090563">
    <property type="term" value="F:protein-phosphocysteine-sugar phosphotransferase activity"/>
    <property type="evidence" value="ECO:0007669"/>
    <property type="project" value="TreeGrafter"/>
</dbReference>
<dbReference type="GO" id="GO:0009401">
    <property type="term" value="P:phosphoenolpyruvate-dependent sugar phosphotransferase system"/>
    <property type="evidence" value="ECO:0007669"/>
    <property type="project" value="UniProtKB-KW"/>
</dbReference>
<dbReference type="CDD" id="cd00211">
    <property type="entry name" value="PTS_IIA_fru"/>
    <property type="match status" value="1"/>
</dbReference>
<dbReference type="CDD" id="cd05567">
    <property type="entry name" value="PTS_IIB_mannitol"/>
    <property type="match status" value="1"/>
</dbReference>
<dbReference type="FunFam" id="3.40.50.2300:FF:000047">
    <property type="entry name" value="PTS system mannitol-specific transporter subunit IICBA"/>
    <property type="match status" value="1"/>
</dbReference>
<dbReference type="Gene3D" id="3.40.50.2300">
    <property type="match status" value="1"/>
</dbReference>
<dbReference type="Gene3D" id="3.40.930.10">
    <property type="entry name" value="Mannitol-specific EII, Chain A"/>
    <property type="match status" value="1"/>
</dbReference>
<dbReference type="InterPro" id="IPR016152">
    <property type="entry name" value="PTrfase/Anion_transptr"/>
</dbReference>
<dbReference type="InterPro" id="IPR002178">
    <property type="entry name" value="PTS_EIIA_type-2_dom"/>
</dbReference>
<dbReference type="InterPro" id="IPR036095">
    <property type="entry name" value="PTS_EIIB-like_sf"/>
</dbReference>
<dbReference type="InterPro" id="IPR013011">
    <property type="entry name" value="PTS_EIIB_2"/>
</dbReference>
<dbReference type="InterPro" id="IPR003501">
    <property type="entry name" value="PTS_EIIB_2/3"/>
</dbReference>
<dbReference type="InterPro" id="IPR029503">
    <property type="entry name" value="PTS_EIIB_mannitol"/>
</dbReference>
<dbReference type="InterPro" id="IPR003352">
    <property type="entry name" value="PTS_EIIC"/>
</dbReference>
<dbReference type="InterPro" id="IPR013014">
    <property type="entry name" value="PTS_EIIC_2"/>
</dbReference>
<dbReference type="InterPro" id="IPR050893">
    <property type="entry name" value="Sugar_PTS"/>
</dbReference>
<dbReference type="NCBIfam" id="NF011663">
    <property type="entry name" value="PRK15083.1"/>
    <property type="match status" value="1"/>
</dbReference>
<dbReference type="PANTHER" id="PTHR30181">
    <property type="entry name" value="MANNITOL PERMEASE IIC COMPONENT"/>
    <property type="match status" value="1"/>
</dbReference>
<dbReference type="PANTHER" id="PTHR30181:SF2">
    <property type="entry name" value="PTS SYSTEM MANNITOL-SPECIFIC EIICBA COMPONENT"/>
    <property type="match status" value="1"/>
</dbReference>
<dbReference type="Pfam" id="PF00359">
    <property type="entry name" value="PTS_EIIA_2"/>
    <property type="match status" value="1"/>
</dbReference>
<dbReference type="Pfam" id="PF02378">
    <property type="entry name" value="PTS_EIIC"/>
    <property type="match status" value="1"/>
</dbReference>
<dbReference type="Pfam" id="PF02302">
    <property type="entry name" value="PTS_IIB"/>
    <property type="match status" value="1"/>
</dbReference>
<dbReference type="SUPFAM" id="SSF55804">
    <property type="entry name" value="Phoshotransferase/anion transport protein"/>
    <property type="match status" value="1"/>
</dbReference>
<dbReference type="SUPFAM" id="SSF52794">
    <property type="entry name" value="PTS system IIB component-like"/>
    <property type="match status" value="1"/>
</dbReference>
<dbReference type="PROSITE" id="PS51094">
    <property type="entry name" value="PTS_EIIA_TYPE_2"/>
    <property type="match status" value="1"/>
</dbReference>
<dbReference type="PROSITE" id="PS00372">
    <property type="entry name" value="PTS_EIIA_TYPE_2_HIS"/>
    <property type="match status" value="1"/>
</dbReference>
<dbReference type="PROSITE" id="PS51099">
    <property type="entry name" value="PTS_EIIB_TYPE_2"/>
    <property type="match status" value="1"/>
</dbReference>
<dbReference type="PROSITE" id="PS51104">
    <property type="entry name" value="PTS_EIIC_TYPE_2"/>
    <property type="match status" value="1"/>
</dbReference>
<proteinExistence type="inferred from homology"/>
<accession>P57635</accession>
<comment type="function">
    <text evidence="1">The phosphoenolpyruvate-dependent sugar phosphotransferase system (sugar PTS), a major carbohydrate active transport system, catalyzes the phosphorylation of incoming sugar substrates concomitantly with their translocation across the cell membrane. This system is involved in D-mannitol transport.</text>
</comment>
<comment type="catalytic activity">
    <reaction evidence="1">
        <text>D-mannitol(out) + N(pros)-phospho-L-histidyl-[protein] = D-mannitol 1-phosphate(in) + L-histidyl-[protein]</text>
        <dbReference type="Rhea" id="RHEA:33363"/>
        <dbReference type="Rhea" id="RHEA-COMP:9745"/>
        <dbReference type="Rhea" id="RHEA-COMP:9746"/>
        <dbReference type="ChEBI" id="CHEBI:16899"/>
        <dbReference type="ChEBI" id="CHEBI:29979"/>
        <dbReference type="ChEBI" id="CHEBI:61381"/>
        <dbReference type="ChEBI" id="CHEBI:64837"/>
        <dbReference type="EC" id="2.7.1.197"/>
    </reaction>
</comment>
<comment type="subunit">
    <text evidence="1">Homodimer.</text>
</comment>
<comment type="subcellular location">
    <subcellularLocation>
        <location evidence="1 4">Cell inner membrane</location>
        <topology evidence="1 4">Multi-pass membrane protein</topology>
    </subcellularLocation>
</comment>
<comment type="induction">
    <text evidence="1">Induced by mannitol. Repressed by MltR.</text>
</comment>
<comment type="domain">
    <text evidence="4">The EIIC type-2 domain forms the PTS system translocation channel and contains the specific substrate-binding site.</text>
</comment>
<comment type="domain">
    <text evidence="3">The PTS EIIB type-2 domain is phosphorylated by phospho-EIIA on a cysteinyl residue. Then, it transfers the phosphoryl group to the sugar substrate concomitantly with the sugar uptake processed by the PTS EIIC type-2 domain.</text>
</comment>
<comment type="domain">
    <text evidence="2">The PTS EIIA type-2 domain is phosphorylated by phospho-HPr on a histidyl residue. Then, it transfers the phosphoryl group to the PTS EIIB type-2 domain.</text>
</comment>
<comment type="PTM">
    <text evidence="1">An intramolecular phosphotransfer takes places between His-548 and Cys-380.</text>
</comment>
<evidence type="ECO:0000250" key="1">
    <source>
        <dbReference type="UniProtKB" id="P00550"/>
    </source>
</evidence>
<evidence type="ECO:0000255" key="2">
    <source>
        <dbReference type="PROSITE-ProRule" id="PRU00417"/>
    </source>
</evidence>
<evidence type="ECO:0000255" key="3">
    <source>
        <dbReference type="PROSITE-ProRule" id="PRU00422"/>
    </source>
</evidence>
<evidence type="ECO:0000255" key="4">
    <source>
        <dbReference type="PROSITE-ProRule" id="PRU00427"/>
    </source>
</evidence>
<protein>
    <recommendedName>
        <fullName evidence="1">PTS system mannitol-specific EIICBA component</fullName>
    </recommendedName>
    <alternativeName>
        <fullName evidence="1">EIICBA-Mtl</fullName>
        <shortName evidence="1">EII-Mtl</shortName>
    </alternativeName>
    <domain>
        <recommendedName>
            <fullName evidence="1">Mannitol permease IIC component</fullName>
        </recommendedName>
        <alternativeName>
            <fullName evidence="1">PTS system mannitol-specific EIIC component</fullName>
        </alternativeName>
    </domain>
    <domain>
        <recommendedName>
            <fullName evidence="1">Mannitol-specific phosphotransferase enzyme IIB component</fullName>
            <ecNumber evidence="1">2.7.1.197</ecNumber>
        </recommendedName>
        <alternativeName>
            <fullName evidence="1">PTS system mannitol-specific EIIB component</fullName>
        </alternativeName>
    </domain>
    <domain>
        <recommendedName>
            <fullName evidence="1">Mannitol-specific phosphotransferase enzyme IIA component</fullName>
        </recommendedName>
        <alternativeName>
            <fullName evidence="1">PTS system mannitol-specific EIIA component</fullName>
        </alternativeName>
    </domain>
</protein>